<name>PPK5B_BLADU</name>
<evidence type="ECO:0000250" key="1">
    <source>
        <dbReference type="UniProtKB" id="P82617"/>
    </source>
</evidence>
<evidence type="ECO:0000255" key="2"/>
<evidence type="ECO:0000269" key="3">
    <source>
    </source>
</evidence>
<evidence type="ECO:0000303" key="4">
    <source>
    </source>
</evidence>
<evidence type="ECO:0000305" key="5"/>
<organism>
    <name type="scientific">Blaptica dubia</name>
    <name type="common">Argentinian wood cockroach</name>
    <dbReference type="NCBI Taxonomy" id="132935"/>
    <lineage>
        <taxon>Eukaryota</taxon>
        <taxon>Metazoa</taxon>
        <taxon>Ecdysozoa</taxon>
        <taxon>Arthropoda</taxon>
        <taxon>Hexapoda</taxon>
        <taxon>Insecta</taxon>
        <taxon>Pterygota</taxon>
        <taxon>Neoptera</taxon>
        <taxon>Polyneoptera</taxon>
        <taxon>Dictyoptera</taxon>
        <taxon>Blattodea</taxon>
        <taxon>Blaberoidea</taxon>
        <taxon>Blaberidae</taxon>
        <taxon>Blaberinae</taxon>
        <taxon>Blaptica</taxon>
    </lineage>
</organism>
<feature type="peptide" id="PRO_0000378678" description="Pyrokinin-5b" evidence="3">
    <location>
        <begin position="1"/>
        <end position="17"/>
    </location>
</feature>
<feature type="modified residue" description="Leucine amide" evidence="3">
    <location>
        <position position="17"/>
    </location>
</feature>
<dbReference type="GO" id="GO:0005576">
    <property type="term" value="C:extracellular region"/>
    <property type="evidence" value="ECO:0007669"/>
    <property type="project" value="UniProtKB-SubCell"/>
</dbReference>
<dbReference type="GO" id="GO:0005184">
    <property type="term" value="F:neuropeptide hormone activity"/>
    <property type="evidence" value="ECO:0007669"/>
    <property type="project" value="InterPro"/>
</dbReference>
<dbReference type="GO" id="GO:0007218">
    <property type="term" value="P:neuropeptide signaling pathway"/>
    <property type="evidence" value="ECO:0007669"/>
    <property type="project" value="UniProtKB-KW"/>
</dbReference>
<dbReference type="InterPro" id="IPR001484">
    <property type="entry name" value="Pyrokinin_CS"/>
</dbReference>
<dbReference type="PROSITE" id="PS00539">
    <property type="entry name" value="PYROKININ"/>
    <property type="match status" value="1"/>
</dbReference>
<keyword id="KW-0027">Amidation</keyword>
<keyword id="KW-0903">Direct protein sequencing</keyword>
<keyword id="KW-0527">Neuropeptide</keyword>
<keyword id="KW-0964">Secreted</keyword>
<protein>
    <recommendedName>
        <fullName evidence="1">Pyrokinin-5b</fullName>
    </recommendedName>
    <alternativeName>
        <fullName evidence="4">BlaDu-Capa-PKb</fullName>
    </alternativeName>
    <alternativeName>
        <fullName evidence="1">FXPRL-amide</fullName>
    </alternativeName>
</protein>
<sequence length="17" mass="1823">GGESSNEAKGMWFGPRL</sequence>
<proteinExistence type="evidence at protein level"/>
<accession>P85548</accession>
<reference evidence="5" key="1">
    <citation type="journal article" date="2009" name="BMC Evol. Biol.">
        <title>A proteomic approach for studying insect phylogeny: CAPA peptides of ancient insect taxa (Dictyoptera, Blattoptera) as a test case.</title>
        <authorList>
            <person name="Roth S."/>
            <person name="Fromm B."/>
            <person name="Gaede G."/>
            <person name="Predel R."/>
        </authorList>
    </citation>
    <scope>PROTEIN SEQUENCE</scope>
    <scope>AMIDATION AT LEU-17</scope>
    <source>
        <tissue evidence="3">Abdominal perisympathetic organs</tissue>
    </source>
</reference>
<comment type="function">
    <text evidence="1">Myoactive.</text>
</comment>
<comment type="subcellular location">
    <subcellularLocation>
        <location evidence="5">Secreted</location>
    </subcellularLocation>
</comment>
<comment type="similarity">
    <text evidence="2">Belongs to the pyrokinin family.</text>
</comment>